<evidence type="ECO:0000255" key="1">
    <source>
        <dbReference type="HAMAP-Rule" id="MF_01907"/>
    </source>
</evidence>
<reference key="1">
    <citation type="journal article" date="2008" name="J. Bacteriol.">
        <title>The pangenome structure of Escherichia coli: comparative genomic analysis of E. coli commensal and pathogenic isolates.</title>
        <authorList>
            <person name="Rasko D.A."/>
            <person name="Rosovitz M.J."/>
            <person name="Myers G.S.A."/>
            <person name="Mongodin E.F."/>
            <person name="Fricke W.F."/>
            <person name="Gajer P."/>
            <person name="Crabtree J."/>
            <person name="Sebaihia M."/>
            <person name="Thomson N.R."/>
            <person name="Chaudhuri R."/>
            <person name="Henderson I.R."/>
            <person name="Sperandio V."/>
            <person name="Ravel J."/>
        </authorList>
    </citation>
    <scope>NUCLEOTIDE SEQUENCE [LARGE SCALE GENOMIC DNA]</scope>
    <source>
        <strain>HS</strain>
    </source>
</reference>
<protein>
    <recommendedName>
        <fullName evidence="1">thr operon leader peptide</fullName>
    </recommendedName>
    <alternativeName>
        <fullName evidence="1">thr operon attenuator</fullName>
    </alternativeName>
</protein>
<comment type="function">
    <text evidence="1">This protein is involved in control of the biosynthesis of threonine.</text>
</comment>
<comment type="similarity">
    <text evidence="1">Belongs to the thr operon leader peptide family.</text>
</comment>
<name>LPT_ECOHS</name>
<proteinExistence type="inferred from homology"/>
<dbReference type="EMBL" id="CP000802">
    <property type="protein sequence ID" value="ABV04403.1"/>
    <property type="molecule type" value="Genomic_DNA"/>
</dbReference>
<dbReference type="RefSeq" id="WP_001386572.1">
    <property type="nucleotide sequence ID" value="NC_009800.1"/>
</dbReference>
<dbReference type="GeneID" id="93777441"/>
<dbReference type="KEGG" id="ecx:EcHS_A0002"/>
<dbReference type="HOGENOM" id="CLU_221491_0_1_6"/>
<dbReference type="GO" id="GO:0009088">
    <property type="term" value="P:threonine biosynthetic process"/>
    <property type="evidence" value="ECO:0007669"/>
    <property type="project" value="UniProtKB-UniRule"/>
</dbReference>
<dbReference type="GO" id="GO:0031556">
    <property type="term" value="P:transcriptional attenuation by ribosome"/>
    <property type="evidence" value="ECO:0007669"/>
    <property type="project" value="UniProtKB-UniRule"/>
</dbReference>
<dbReference type="HAMAP" id="MF_01907">
    <property type="entry name" value="Leader_Thr"/>
    <property type="match status" value="1"/>
</dbReference>
<dbReference type="InterPro" id="IPR011720">
    <property type="entry name" value="Thr_lead_pept"/>
</dbReference>
<dbReference type="NCBIfam" id="NF007329">
    <property type="entry name" value="PRK09816.1"/>
    <property type="match status" value="1"/>
</dbReference>
<dbReference type="NCBIfam" id="TIGR02077">
    <property type="entry name" value="thr_lead_pep"/>
    <property type="match status" value="1"/>
</dbReference>
<dbReference type="Pfam" id="PF08254">
    <property type="entry name" value="Leader_Thr"/>
    <property type="match status" value="1"/>
</dbReference>
<feature type="peptide" id="PRO_1000070621" description="thr operon leader peptide">
    <location>
        <begin position="1"/>
        <end position="21"/>
    </location>
</feature>
<accession>A7ZVW0</accession>
<gene>
    <name evidence="1" type="primary">thrL</name>
    <name type="ordered locus">EcHS_A0002</name>
</gene>
<sequence>MKRISTTITTTITITTGNGAG</sequence>
<keyword id="KW-0028">Amino-acid biosynthesis</keyword>
<keyword id="KW-0428">Leader peptide</keyword>
<keyword id="KW-0791">Threonine biosynthesis</keyword>
<organism>
    <name type="scientific">Escherichia coli O9:H4 (strain HS)</name>
    <dbReference type="NCBI Taxonomy" id="331112"/>
    <lineage>
        <taxon>Bacteria</taxon>
        <taxon>Pseudomonadati</taxon>
        <taxon>Pseudomonadota</taxon>
        <taxon>Gammaproteobacteria</taxon>
        <taxon>Enterobacterales</taxon>
        <taxon>Enterobacteriaceae</taxon>
        <taxon>Escherichia</taxon>
    </lineage>
</organism>